<protein>
    <recommendedName>
        <fullName>Leucine aminopeptidase 2</fullName>
        <ecNumber>3.4.11.-</ecNumber>
    </recommendedName>
    <alternativeName>
        <fullName>Epoxide hydrolase</fullName>
        <ecNumber>3.3.2.10</ecNumber>
    </alternativeName>
    <alternativeName>
        <fullName>Leukotriene A-4 hydrolase homolog</fullName>
        <shortName>LTA-4 hydrolase</shortName>
    </alternativeName>
</protein>
<reference key="1">
    <citation type="journal article" date="2009" name="Genome Res.">
        <title>Comparative genomic analyses of the human fungal pathogens Coccidioides and their relatives.</title>
        <authorList>
            <person name="Sharpton T.J."/>
            <person name="Stajich J.E."/>
            <person name="Rounsley S.D."/>
            <person name="Gardner M.J."/>
            <person name="Wortman J.R."/>
            <person name="Jordar V.S."/>
            <person name="Maiti R."/>
            <person name="Kodira C.D."/>
            <person name="Neafsey D.E."/>
            <person name="Zeng Q."/>
            <person name="Hung C.-Y."/>
            <person name="McMahan C."/>
            <person name="Muszewska A."/>
            <person name="Grynberg M."/>
            <person name="Mandel M.A."/>
            <person name="Kellner E.M."/>
            <person name="Barker B.M."/>
            <person name="Galgiani J.N."/>
            <person name="Orbach M.J."/>
            <person name="Kirkland T.N."/>
            <person name="Cole G.T."/>
            <person name="Henn M.R."/>
            <person name="Birren B.W."/>
            <person name="Taylor J.W."/>
        </authorList>
    </citation>
    <scope>NUCLEOTIDE SEQUENCE [LARGE SCALE GENOMIC DNA]</scope>
    <source>
        <strain>RS</strain>
    </source>
</reference>
<reference key="2">
    <citation type="journal article" date="2010" name="Genome Res.">
        <title>Population genomic sequencing of Coccidioides fungi reveals recent hybridization and transposon control.</title>
        <authorList>
            <person name="Neafsey D.E."/>
            <person name="Barker B.M."/>
            <person name="Sharpton T.J."/>
            <person name="Stajich J.E."/>
            <person name="Park D.J."/>
            <person name="Whiston E."/>
            <person name="Hung C.-Y."/>
            <person name="McMahan C."/>
            <person name="White J."/>
            <person name="Sykes S."/>
            <person name="Heiman D."/>
            <person name="Young S."/>
            <person name="Zeng Q."/>
            <person name="Abouelleil A."/>
            <person name="Aftuck L."/>
            <person name="Bessette D."/>
            <person name="Brown A."/>
            <person name="FitzGerald M."/>
            <person name="Lui A."/>
            <person name="Macdonald J.P."/>
            <person name="Priest M."/>
            <person name="Orbach M.J."/>
            <person name="Galgiani J.N."/>
            <person name="Kirkland T.N."/>
            <person name="Cole G.T."/>
            <person name="Birren B.W."/>
            <person name="Henn M.R."/>
            <person name="Taylor J.W."/>
            <person name="Rounsley S.D."/>
        </authorList>
    </citation>
    <scope>GENOME REANNOTATION</scope>
    <source>
        <strain>RS</strain>
    </source>
</reference>
<feature type="chain" id="PRO_0000324927" description="Leucine aminopeptidase 2">
    <location>
        <begin position="1"/>
        <end position="619"/>
    </location>
</feature>
<feature type="active site" description="Proton acceptor" evidence="3">
    <location>
        <position position="303"/>
    </location>
</feature>
<feature type="active site" description="Proton donor" evidence="3">
    <location>
        <position position="390"/>
    </location>
</feature>
<feature type="binding site" evidence="1">
    <location>
        <begin position="141"/>
        <end position="143"/>
    </location>
    <ligand>
        <name>a peptide</name>
        <dbReference type="ChEBI" id="CHEBI:60466"/>
    </ligand>
</feature>
<feature type="binding site" evidence="1">
    <location>
        <begin position="273"/>
        <end position="278"/>
    </location>
    <ligand>
        <name>a peptide</name>
        <dbReference type="ChEBI" id="CHEBI:60466"/>
    </ligand>
</feature>
<feature type="binding site" evidence="3">
    <location>
        <position position="302"/>
    </location>
    <ligand>
        <name>Zn(2+)</name>
        <dbReference type="ChEBI" id="CHEBI:29105"/>
        <note>catalytic</note>
    </ligand>
</feature>
<feature type="binding site" evidence="3">
    <location>
        <position position="306"/>
    </location>
    <ligand>
        <name>Zn(2+)</name>
        <dbReference type="ChEBI" id="CHEBI:29105"/>
        <note>catalytic</note>
    </ligand>
</feature>
<feature type="binding site" evidence="3">
    <location>
        <position position="325"/>
    </location>
    <ligand>
        <name>Zn(2+)</name>
        <dbReference type="ChEBI" id="CHEBI:29105"/>
        <note>catalytic</note>
    </ligand>
</feature>
<accession>Q1DVD1</accession>
<accession>A0A0D6K9N7</accession>
<accession>J3K747</accession>
<proteinExistence type="inferred from homology"/>
<evidence type="ECO:0000250" key="1"/>
<evidence type="ECO:0000250" key="2">
    <source>
        <dbReference type="UniProtKB" id="Q10740"/>
    </source>
</evidence>
<evidence type="ECO:0000255" key="3">
    <source>
        <dbReference type="PROSITE-ProRule" id="PRU10095"/>
    </source>
</evidence>
<evidence type="ECO:0000305" key="4"/>
<organism>
    <name type="scientific">Coccidioides immitis (strain RS)</name>
    <name type="common">Valley fever fungus</name>
    <dbReference type="NCBI Taxonomy" id="246410"/>
    <lineage>
        <taxon>Eukaryota</taxon>
        <taxon>Fungi</taxon>
        <taxon>Dikarya</taxon>
        <taxon>Ascomycota</taxon>
        <taxon>Pezizomycotina</taxon>
        <taxon>Eurotiomycetes</taxon>
        <taxon>Eurotiomycetidae</taxon>
        <taxon>Onygenales</taxon>
        <taxon>Onygenaceae</taxon>
        <taxon>Coccidioides</taxon>
    </lineage>
</organism>
<name>LKHA4_COCIM</name>
<keyword id="KW-0963">Cytoplasm</keyword>
<keyword id="KW-0378">Hydrolase</keyword>
<keyword id="KW-0479">Metal-binding</keyword>
<keyword id="KW-0482">Metalloprotease</keyword>
<keyword id="KW-0539">Nucleus</keyword>
<keyword id="KW-0645">Protease</keyword>
<keyword id="KW-1185">Reference proteome</keyword>
<keyword id="KW-0862">Zinc</keyword>
<sequence length="619" mass="70678">MKMATPANPLRDPNTLSNYNKFRTVHTSVNFEIRFDQKRLVGNVIHRLKSLTNAESKEVILDSSYLEVKSVKVNGEAAEWQLLPRFEPYGSPLKISLEQAIPLDELIEVDISVNTTEKCTALQWLNPEQTSNGKHPYMFSQCQAIHARAIFPCQDTPDVKATFDFNLSSPLPVIASGVPVKQDASPPQSSGSIYYRFEQKVPIPSYLFAIASGDIAQAQIGPRSHVAVSPDRLDECKWELEGDTERFLQTIGNIIFPYVWGEYNVLILPPSFPYGGMENPVYTFATPSIISKDRQNVDVIAHEISHSWSGNLVTNCSWEHFWLNEGWTTYLERRIQAAIHGEPYRHFSAIIGWKHLVDSVERHGDTHEFTKLVVDLKGKDPDDAFSSVPYEKGFTFIFHLENLIGKDKFDKFIPHYFTRFRGKSLDSYEFKSCILDFFASDEESHVLLNKLDWDSWFYKPGLPPKPSFDTSLVDVVYELANKWKYISQSSFSPKASDMDGLVANQIVVFLEQVLLFDNPLTPEQSRFMGQVYNFAQSQNIEVSYLYLQVGLKAGDDSIVEPTIKLLGEIGRMKFVRPLYRTLEKFNRDIAVDTFEKHKNFYHPICRGLLEKDLFGDKGA</sequence>
<comment type="function">
    <text evidence="2">Aminopeptidase that preferentially cleaves di- and tripeptides. Also has low epoxide hydrolase activity (in vitro). Can hydrolyze the epoxide leukotriene LTA(4) but it forms preferentially 5,6-dihydroxy-7,9,11,14-eicosatetraenoic acid rather than the cytokine leukotriene B(4) as the product compared to the homologous mammalian enzyme (in vitro).</text>
</comment>
<comment type="catalytic activity">
    <reaction evidence="2">
        <text>an epoxide + H2O = an ethanediol</text>
        <dbReference type="Rhea" id="RHEA:19037"/>
        <dbReference type="ChEBI" id="CHEBI:15377"/>
        <dbReference type="ChEBI" id="CHEBI:32955"/>
        <dbReference type="ChEBI" id="CHEBI:140594"/>
        <dbReference type="EC" id="3.3.2.10"/>
    </reaction>
</comment>
<comment type="cofactor">
    <cofactor evidence="2">
        <name>Zn(2+)</name>
        <dbReference type="ChEBI" id="CHEBI:29105"/>
    </cofactor>
    <text evidence="2">Binds 1 zinc ion per subunit.</text>
</comment>
<comment type="subcellular location">
    <subcellularLocation>
        <location evidence="2">Cytoplasm</location>
    </subcellularLocation>
    <subcellularLocation>
        <location evidence="2">Nucleus</location>
    </subcellularLocation>
</comment>
<comment type="similarity">
    <text evidence="4">Belongs to the peptidase M1 family.</text>
</comment>
<dbReference type="EC" id="3.4.11.-"/>
<dbReference type="EC" id="3.3.2.10"/>
<dbReference type="EMBL" id="GG704915">
    <property type="protein sequence ID" value="EAS30253.2"/>
    <property type="molecule type" value="Genomic_DNA"/>
</dbReference>
<dbReference type="RefSeq" id="XP_001241836.2">
    <property type="nucleotide sequence ID" value="XM_001241835.2"/>
</dbReference>
<dbReference type="SMR" id="Q1DVD1"/>
<dbReference type="FunCoup" id="Q1DVD1">
    <property type="interactions" value="984"/>
</dbReference>
<dbReference type="STRING" id="246410.Q1DVD1"/>
<dbReference type="MEROPS" id="M01.034"/>
<dbReference type="GeneID" id="4561263"/>
<dbReference type="KEGG" id="cim:CIMG_05732"/>
<dbReference type="VEuPathDB" id="FungiDB:CIMG_05732"/>
<dbReference type="InParanoid" id="Q1DVD1"/>
<dbReference type="OMA" id="CTALQWM"/>
<dbReference type="OrthoDB" id="79562at2759"/>
<dbReference type="Proteomes" id="UP000001261">
    <property type="component" value="Unassembled WGS sequence"/>
</dbReference>
<dbReference type="GO" id="GO:0005829">
    <property type="term" value="C:cytosol"/>
    <property type="evidence" value="ECO:0007669"/>
    <property type="project" value="TreeGrafter"/>
</dbReference>
<dbReference type="GO" id="GO:0005634">
    <property type="term" value="C:nucleus"/>
    <property type="evidence" value="ECO:0007669"/>
    <property type="project" value="UniProtKB-SubCell"/>
</dbReference>
<dbReference type="GO" id="GO:0004177">
    <property type="term" value="F:aminopeptidase activity"/>
    <property type="evidence" value="ECO:0000250"/>
    <property type="project" value="UniProtKB"/>
</dbReference>
<dbReference type="GO" id="GO:0004301">
    <property type="term" value="F:epoxide hydrolase activity"/>
    <property type="evidence" value="ECO:0000250"/>
    <property type="project" value="UniProtKB"/>
</dbReference>
<dbReference type="GO" id="GO:0008237">
    <property type="term" value="F:metallopeptidase activity"/>
    <property type="evidence" value="ECO:0007669"/>
    <property type="project" value="UniProtKB-KW"/>
</dbReference>
<dbReference type="GO" id="GO:0008270">
    <property type="term" value="F:zinc ion binding"/>
    <property type="evidence" value="ECO:0000250"/>
    <property type="project" value="UniProtKB"/>
</dbReference>
<dbReference type="GO" id="GO:0043171">
    <property type="term" value="P:peptide catabolic process"/>
    <property type="evidence" value="ECO:0000250"/>
    <property type="project" value="UniProtKB"/>
</dbReference>
<dbReference type="GO" id="GO:0006508">
    <property type="term" value="P:proteolysis"/>
    <property type="evidence" value="ECO:0007669"/>
    <property type="project" value="UniProtKB-KW"/>
</dbReference>
<dbReference type="CDD" id="cd09599">
    <property type="entry name" value="M1_LTA4H"/>
    <property type="match status" value="1"/>
</dbReference>
<dbReference type="FunFam" id="1.10.390.10:FF:000009">
    <property type="entry name" value="Leukotriene A(4) hydrolase"/>
    <property type="match status" value="1"/>
</dbReference>
<dbReference type="FunFam" id="1.25.40.320:FF:000001">
    <property type="entry name" value="Leukotriene A(4) hydrolase"/>
    <property type="match status" value="1"/>
</dbReference>
<dbReference type="FunFam" id="2.60.40.1730:FF:000004">
    <property type="entry name" value="Leukotriene A(4) hydrolase"/>
    <property type="match status" value="1"/>
</dbReference>
<dbReference type="FunFam" id="3.30.2010.30:FF:000001">
    <property type="entry name" value="Leukotriene A(4) hydrolase"/>
    <property type="match status" value="1"/>
</dbReference>
<dbReference type="Gene3D" id="3.30.2010.30">
    <property type="match status" value="1"/>
</dbReference>
<dbReference type="Gene3D" id="1.10.390.10">
    <property type="entry name" value="Neutral Protease Domain 2"/>
    <property type="match status" value="1"/>
</dbReference>
<dbReference type="Gene3D" id="1.25.40.320">
    <property type="entry name" value="Peptidase M1, leukotriene A4 hydrolase/aminopeptidase C-terminal domain"/>
    <property type="match status" value="1"/>
</dbReference>
<dbReference type="Gene3D" id="2.60.40.1730">
    <property type="entry name" value="tricorn interacting facor f3 domain"/>
    <property type="match status" value="1"/>
</dbReference>
<dbReference type="InterPro" id="IPR045357">
    <property type="entry name" value="Aminopeptidase_N-like_N"/>
</dbReference>
<dbReference type="InterPro" id="IPR042097">
    <property type="entry name" value="Aminopeptidase_N-like_N_sf"/>
</dbReference>
<dbReference type="InterPro" id="IPR016024">
    <property type="entry name" value="ARM-type_fold"/>
</dbReference>
<dbReference type="InterPro" id="IPR012777">
    <property type="entry name" value="LTA4H"/>
</dbReference>
<dbReference type="InterPro" id="IPR049980">
    <property type="entry name" value="LTA4H_cat"/>
</dbReference>
<dbReference type="InterPro" id="IPR038502">
    <property type="entry name" value="M1_LTA-4_hydro/amino_C_sf"/>
</dbReference>
<dbReference type="InterPro" id="IPR034015">
    <property type="entry name" value="M1_LTA4H"/>
</dbReference>
<dbReference type="InterPro" id="IPR001930">
    <property type="entry name" value="Peptidase_M1"/>
</dbReference>
<dbReference type="InterPro" id="IPR015211">
    <property type="entry name" value="Peptidase_M1_C"/>
</dbReference>
<dbReference type="InterPro" id="IPR014782">
    <property type="entry name" value="Peptidase_M1_dom"/>
</dbReference>
<dbReference type="InterPro" id="IPR027268">
    <property type="entry name" value="Peptidase_M4/M1_CTD_sf"/>
</dbReference>
<dbReference type="NCBIfam" id="TIGR02411">
    <property type="entry name" value="leuko_A4_hydro"/>
    <property type="match status" value="1"/>
</dbReference>
<dbReference type="PANTHER" id="PTHR45726">
    <property type="entry name" value="LEUKOTRIENE A-4 HYDROLASE"/>
    <property type="match status" value="1"/>
</dbReference>
<dbReference type="PANTHER" id="PTHR45726:SF3">
    <property type="entry name" value="LEUKOTRIENE A-4 HYDROLASE"/>
    <property type="match status" value="1"/>
</dbReference>
<dbReference type="Pfam" id="PF09127">
    <property type="entry name" value="Leuk-A4-hydro_C"/>
    <property type="match status" value="1"/>
</dbReference>
<dbReference type="Pfam" id="PF01433">
    <property type="entry name" value="Peptidase_M1"/>
    <property type="match status" value="1"/>
</dbReference>
<dbReference type="Pfam" id="PF17900">
    <property type="entry name" value="Peptidase_M1_N"/>
    <property type="match status" value="1"/>
</dbReference>
<dbReference type="PRINTS" id="PR00756">
    <property type="entry name" value="ALADIPTASE"/>
</dbReference>
<dbReference type="SMART" id="SM01263">
    <property type="entry name" value="Leuk-A4-hydro_C"/>
    <property type="match status" value="1"/>
</dbReference>
<dbReference type="SUPFAM" id="SSF48371">
    <property type="entry name" value="ARM repeat"/>
    <property type="match status" value="1"/>
</dbReference>
<dbReference type="SUPFAM" id="SSF63737">
    <property type="entry name" value="Leukotriene A4 hydrolase N-terminal domain"/>
    <property type="match status" value="1"/>
</dbReference>
<dbReference type="SUPFAM" id="SSF55486">
    <property type="entry name" value="Metalloproteases ('zincins'), catalytic domain"/>
    <property type="match status" value="1"/>
</dbReference>
<dbReference type="PROSITE" id="PS00142">
    <property type="entry name" value="ZINC_PROTEASE"/>
    <property type="match status" value="1"/>
</dbReference>
<gene>
    <name type="ORF">CIMG_05732</name>
</gene>